<evidence type="ECO:0000255" key="1">
    <source>
        <dbReference type="HAMAP-Rule" id="MF_00197"/>
    </source>
</evidence>
<organism>
    <name type="scientific">Shewanella oneidensis (strain ATCC 700550 / JCM 31522 / CIP 106686 / LMG 19005 / NCIMB 14063 / MR-1)</name>
    <dbReference type="NCBI Taxonomy" id="211586"/>
    <lineage>
        <taxon>Bacteria</taxon>
        <taxon>Pseudomonadati</taxon>
        <taxon>Pseudomonadota</taxon>
        <taxon>Gammaproteobacteria</taxon>
        <taxon>Alteromonadales</taxon>
        <taxon>Shewanellaceae</taxon>
        <taxon>Shewanella</taxon>
    </lineage>
</organism>
<dbReference type="EC" id="5.1.1.7" evidence="1"/>
<dbReference type="EMBL" id="AE014299">
    <property type="protein sequence ID" value="AAN57277.1"/>
    <property type="molecule type" value="Genomic_DNA"/>
</dbReference>
<dbReference type="RefSeq" id="NP_719833.1">
    <property type="nucleotide sequence ID" value="NC_004347.2"/>
</dbReference>
<dbReference type="RefSeq" id="WP_011073967.1">
    <property type="nucleotide sequence ID" value="NC_004347.2"/>
</dbReference>
<dbReference type="SMR" id="Q8E9H5"/>
<dbReference type="STRING" id="211586.SO_4308"/>
<dbReference type="PaxDb" id="211586-SO_4308"/>
<dbReference type="KEGG" id="son:SO_4308"/>
<dbReference type="PATRIC" id="fig|211586.12.peg.4171"/>
<dbReference type="eggNOG" id="COG0253">
    <property type="taxonomic scope" value="Bacteria"/>
</dbReference>
<dbReference type="HOGENOM" id="CLU_053306_1_1_6"/>
<dbReference type="OrthoDB" id="9805408at2"/>
<dbReference type="PhylomeDB" id="Q8E9H5"/>
<dbReference type="BioCyc" id="SONE211586:G1GMP-3979-MONOMER"/>
<dbReference type="UniPathway" id="UPA00034">
    <property type="reaction ID" value="UER00025"/>
</dbReference>
<dbReference type="Proteomes" id="UP000008186">
    <property type="component" value="Chromosome"/>
</dbReference>
<dbReference type="GO" id="GO:0005829">
    <property type="term" value="C:cytosol"/>
    <property type="evidence" value="ECO:0000318"/>
    <property type="project" value="GO_Central"/>
</dbReference>
<dbReference type="GO" id="GO:0008837">
    <property type="term" value="F:diaminopimelate epimerase activity"/>
    <property type="evidence" value="ECO:0000318"/>
    <property type="project" value="GO_Central"/>
</dbReference>
<dbReference type="GO" id="GO:0009089">
    <property type="term" value="P:lysine biosynthetic process via diaminopimelate"/>
    <property type="evidence" value="ECO:0000318"/>
    <property type="project" value="GO_Central"/>
</dbReference>
<dbReference type="FunFam" id="3.10.310.10:FF:000001">
    <property type="entry name" value="Diaminopimelate epimerase"/>
    <property type="match status" value="1"/>
</dbReference>
<dbReference type="FunFam" id="3.10.310.10:FF:000002">
    <property type="entry name" value="Diaminopimelate epimerase"/>
    <property type="match status" value="1"/>
</dbReference>
<dbReference type="Gene3D" id="3.10.310.10">
    <property type="entry name" value="Diaminopimelate Epimerase, Chain A, domain 1"/>
    <property type="match status" value="2"/>
</dbReference>
<dbReference type="HAMAP" id="MF_00197">
    <property type="entry name" value="DAP_epimerase"/>
    <property type="match status" value="1"/>
</dbReference>
<dbReference type="InterPro" id="IPR018510">
    <property type="entry name" value="DAP_epimerase_AS"/>
</dbReference>
<dbReference type="InterPro" id="IPR001653">
    <property type="entry name" value="DAP_epimerase_DapF"/>
</dbReference>
<dbReference type="NCBIfam" id="TIGR00652">
    <property type="entry name" value="DapF"/>
    <property type="match status" value="1"/>
</dbReference>
<dbReference type="PANTHER" id="PTHR31689:SF0">
    <property type="entry name" value="DIAMINOPIMELATE EPIMERASE"/>
    <property type="match status" value="1"/>
</dbReference>
<dbReference type="PANTHER" id="PTHR31689">
    <property type="entry name" value="DIAMINOPIMELATE EPIMERASE, CHLOROPLASTIC"/>
    <property type="match status" value="1"/>
</dbReference>
<dbReference type="Pfam" id="PF01678">
    <property type="entry name" value="DAP_epimerase"/>
    <property type="match status" value="2"/>
</dbReference>
<dbReference type="SUPFAM" id="SSF54506">
    <property type="entry name" value="Diaminopimelate epimerase-like"/>
    <property type="match status" value="1"/>
</dbReference>
<dbReference type="PROSITE" id="PS01326">
    <property type="entry name" value="DAP_EPIMERASE"/>
    <property type="match status" value="1"/>
</dbReference>
<name>DAPF_SHEON</name>
<proteinExistence type="inferred from homology"/>
<comment type="function">
    <text evidence="1">Catalyzes the stereoinversion of LL-2,6-diaminopimelate (L,L-DAP) to meso-diaminopimelate (meso-DAP), a precursor of L-lysine and an essential component of the bacterial peptidoglycan.</text>
</comment>
<comment type="catalytic activity">
    <reaction evidence="1">
        <text>(2S,6S)-2,6-diaminopimelate = meso-2,6-diaminopimelate</text>
        <dbReference type="Rhea" id="RHEA:15393"/>
        <dbReference type="ChEBI" id="CHEBI:57609"/>
        <dbReference type="ChEBI" id="CHEBI:57791"/>
        <dbReference type="EC" id="5.1.1.7"/>
    </reaction>
</comment>
<comment type="pathway">
    <text evidence="1">Amino-acid biosynthesis; L-lysine biosynthesis via DAP pathway; DL-2,6-diaminopimelate from LL-2,6-diaminopimelate: step 1/1.</text>
</comment>
<comment type="subunit">
    <text evidence="1">Homodimer.</text>
</comment>
<comment type="subcellular location">
    <subcellularLocation>
        <location evidence="1">Cytoplasm</location>
    </subcellularLocation>
</comment>
<comment type="similarity">
    <text evidence="1">Belongs to the diaminopimelate epimerase family.</text>
</comment>
<keyword id="KW-0028">Amino-acid biosynthesis</keyword>
<keyword id="KW-0963">Cytoplasm</keyword>
<keyword id="KW-0413">Isomerase</keyword>
<keyword id="KW-0457">Lysine biosynthesis</keyword>
<keyword id="KW-1185">Reference proteome</keyword>
<feature type="chain" id="PRO_0000149870" description="Diaminopimelate epimerase">
    <location>
        <begin position="1"/>
        <end position="275"/>
    </location>
</feature>
<feature type="active site" description="Proton donor" evidence="1">
    <location>
        <position position="74"/>
    </location>
</feature>
<feature type="active site" description="Proton acceptor" evidence="1">
    <location>
        <position position="218"/>
    </location>
</feature>
<feature type="binding site" evidence="1">
    <location>
        <position position="12"/>
    </location>
    <ligand>
        <name>substrate</name>
    </ligand>
</feature>
<feature type="binding site" evidence="1">
    <location>
        <position position="45"/>
    </location>
    <ligand>
        <name>substrate</name>
    </ligand>
</feature>
<feature type="binding site" evidence="1">
    <location>
        <position position="65"/>
    </location>
    <ligand>
        <name>substrate</name>
    </ligand>
</feature>
<feature type="binding site" evidence="1">
    <location>
        <begin position="75"/>
        <end position="76"/>
    </location>
    <ligand>
        <name>substrate</name>
    </ligand>
</feature>
<feature type="binding site" evidence="1">
    <location>
        <position position="158"/>
    </location>
    <ligand>
        <name>substrate</name>
    </ligand>
</feature>
<feature type="binding site" evidence="1">
    <location>
        <position position="191"/>
    </location>
    <ligand>
        <name>substrate</name>
    </ligand>
</feature>
<feature type="binding site" evidence="1">
    <location>
        <begin position="209"/>
        <end position="210"/>
    </location>
    <ligand>
        <name>substrate</name>
    </ligand>
</feature>
<feature type="binding site" evidence="1">
    <location>
        <begin position="219"/>
        <end position="220"/>
    </location>
    <ligand>
        <name>substrate</name>
    </ligand>
</feature>
<feature type="site" description="Could be important to modulate the pK values of the two catalytic cysteine residues" evidence="1">
    <location>
        <position position="160"/>
    </location>
</feature>
<feature type="site" description="Could be important to modulate the pK values of the two catalytic cysteine residues" evidence="1">
    <location>
        <position position="209"/>
    </location>
</feature>
<feature type="site" description="Important for dimerization" evidence="1">
    <location>
        <position position="269"/>
    </location>
</feature>
<reference key="1">
    <citation type="journal article" date="2002" name="Nat. Biotechnol.">
        <title>Genome sequence of the dissimilatory metal ion-reducing bacterium Shewanella oneidensis.</title>
        <authorList>
            <person name="Heidelberg J.F."/>
            <person name="Paulsen I.T."/>
            <person name="Nelson K.E."/>
            <person name="Gaidos E.J."/>
            <person name="Nelson W.C."/>
            <person name="Read T.D."/>
            <person name="Eisen J.A."/>
            <person name="Seshadri R."/>
            <person name="Ward N.L."/>
            <person name="Methe B.A."/>
            <person name="Clayton R.A."/>
            <person name="Meyer T."/>
            <person name="Tsapin A."/>
            <person name="Scott J."/>
            <person name="Beanan M.J."/>
            <person name="Brinkac L.M."/>
            <person name="Daugherty S.C."/>
            <person name="DeBoy R.T."/>
            <person name="Dodson R.J."/>
            <person name="Durkin A.S."/>
            <person name="Haft D.H."/>
            <person name="Kolonay J.F."/>
            <person name="Madupu R."/>
            <person name="Peterson J.D."/>
            <person name="Umayam L.A."/>
            <person name="White O."/>
            <person name="Wolf A.M."/>
            <person name="Vamathevan J.J."/>
            <person name="Weidman J.F."/>
            <person name="Impraim M."/>
            <person name="Lee K."/>
            <person name="Berry K.J."/>
            <person name="Lee C."/>
            <person name="Mueller J."/>
            <person name="Khouri H.M."/>
            <person name="Gill J."/>
            <person name="Utterback T.R."/>
            <person name="McDonald L.A."/>
            <person name="Feldblyum T.V."/>
            <person name="Smith H.O."/>
            <person name="Venter J.C."/>
            <person name="Nealson K.H."/>
            <person name="Fraser C.M."/>
        </authorList>
    </citation>
    <scope>NUCLEOTIDE SEQUENCE [LARGE SCALE GENOMIC DNA]</scope>
    <source>
        <strain>ATCC 700550 / JCM 31522 / CIP 106686 / LMG 19005 / NCIMB 14063 / MR-1</strain>
    </source>
</reference>
<accession>Q8E9H5</accession>
<protein>
    <recommendedName>
        <fullName evidence="1">Diaminopimelate epimerase</fullName>
        <shortName evidence="1">DAP epimerase</shortName>
        <ecNumber evidence="1">5.1.1.7</ecNumber>
    </recommendedName>
    <alternativeName>
        <fullName evidence="1">PLP-independent amino acid racemase</fullName>
    </alternativeName>
</protein>
<sequence>MIQFTKMHGLGNDFMVVDGITQNVFFSPEQIRRLADRNFGVGFDQLLLVEPPYDPDLDFHYRIFNADGGEVENCGNGARCFARFVRNKGLTNKNKIRVSTSAGKMTLRLERDGTVTVNMGVPVLEPSQIPFKAKKAEKTYLLQTPQQTFLCGAASMGNPHCVLDVEDVANANVAEIGALLTKHERFPRGVNVGFMQVVNAGHIKLRVYERGAAETLACGTGACAAVVVGQIQGKLDQQVQVDLPGGSLTINWEGEGKPLWMTGPAQHVYDGQIQL</sequence>
<gene>
    <name evidence="1" type="primary">dapF</name>
    <name type="ordered locus">SO_4308</name>
</gene>